<keyword id="KW-0004">4Fe-4S</keyword>
<keyword id="KW-0342">GTP-binding</keyword>
<keyword id="KW-0408">Iron</keyword>
<keyword id="KW-0411">Iron-sulfur</keyword>
<keyword id="KW-0456">Lyase</keyword>
<keyword id="KW-0479">Metal-binding</keyword>
<keyword id="KW-0501">Molybdenum cofactor biosynthesis</keyword>
<keyword id="KW-0547">Nucleotide-binding</keyword>
<keyword id="KW-0949">S-adenosyl-L-methionine</keyword>
<gene>
    <name evidence="1" type="primary">moaA</name>
    <name type="ordered locus">CPR_1760</name>
</gene>
<organism>
    <name type="scientific">Clostridium perfringens (strain SM101 / Type A)</name>
    <dbReference type="NCBI Taxonomy" id="289380"/>
    <lineage>
        <taxon>Bacteria</taxon>
        <taxon>Bacillati</taxon>
        <taxon>Bacillota</taxon>
        <taxon>Clostridia</taxon>
        <taxon>Eubacteriales</taxon>
        <taxon>Clostridiaceae</taxon>
        <taxon>Clostridium</taxon>
    </lineage>
</organism>
<name>MOAA_CLOPS</name>
<evidence type="ECO:0000255" key="1">
    <source>
        <dbReference type="HAMAP-Rule" id="MF_01225"/>
    </source>
</evidence>
<evidence type="ECO:0000255" key="2">
    <source>
        <dbReference type="PROSITE-ProRule" id="PRU01266"/>
    </source>
</evidence>
<reference key="1">
    <citation type="journal article" date="2006" name="Genome Res.">
        <title>Skewed genomic variability in strains of the toxigenic bacterial pathogen, Clostridium perfringens.</title>
        <authorList>
            <person name="Myers G.S.A."/>
            <person name="Rasko D.A."/>
            <person name="Cheung J.K."/>
            <person name="Ravel J."/>
            <person name="Seshadri R."/>
            <person name="DeBoy R.T."/>
            <person name="Ren Q."/>
            <person name="Varga J."/>
            <person name="Awad M.M."/>
            <person name="Brinkac L.M."/>
            <person name="Daugherty S.C."/>
            <person name="Haft D.H."/>
            <person name="Dodson R.J."/>
            <person name="Madupu R."/>
            <person name="Nelson W.C."/>
            <person name="Rosovitz M.J."/>
            <person name="Sullivan S.A."/>
            <person name="Khouri H."/>
            <person name="Dimitrov G.I."/>
            <person name="Watkins K.L."/>
            <person name="Mulligan S."/>
            <person name="Benton J."/>
            <person name="Radune D."/>
            <person name="Fisher D.J."/>
            <person name="Atkins H.S."/>
            <person name="Hiscox T."/>
            <person name="Jost B.H."/>
            <person name="Billington S.J."/>
            <person name="Songer J.G."/>
            <person name="McClane B.A."/>
            <person name="Titball R.W."/>
            <person name="Rood J.I."/>
            <person name="Melville S.B."/>
            <person name="Paulsen I.T."/>
        </authorList>
    </citation>
    <scope>NUCLEOTIDE SEQUENCE [LARGE SCALE GENOMIC DNA]</scope>
    <source>
        <strain>SM101 / Type A</strain>
    </source>
</reference>
<feature type="chain" id="PRO_1000054189" description="GTP 3',8-cyclase">
    <location>
        <begin position="1"/>
        <end position="323"/>
    </location>
</feature>
<feature type="domain" description="Radical SAM core" evidence="2">
    <location>
        <begin position="4"/>
        <end position="233"/>
    </location>
</feature>
<feature type="binding site" evidence="1">
    <location>
        <position position="13"/>
    </location>
    <ligand>
        <name>GTP</name>
        <dbReference type="ChEBI" id="CHEBI:37565"/>
    </ligand>
</feature>
<feature type="binding site" evidence="1">
    <location>
        <position position="20"/>
    </location>
    <ligand>
        <name>[4Fe-4S] cluster</name>
        <dbReference type="ChEBI" id="CHEBI:49883"/>
        <label>1</label>
        <note>4Fe-4S-S-AdoMet</note>
    </ligand>
</feature>
<feature type="binding site" evidence="1">
    <location>
        <position position="24"/>
    </location>
    <ligand>
        <name>[4Fe-4S] cluster</name>
        <dbReference type="ChEBI" id="CHEBI:49883"/>
        <label>1</label>
        <note>4Fe-4S-S-AdoMet</note>
    </ligand>
</feature>
<feature type="binding site" evidence="1">
    <location>
        <position position="26"/>
    </location>
    <ligand>
        <name>S-adenosyl-L-methionine</name>
        <dbReference type="ChEBI" id="CHEBI:59789"/>
    </ligand>
</feature>
<feature type="binding site" evidence="1">
    <location>
        <position position="27"/>
    </location>
    <ligand>
        <name>[4Fe-4S] cluster</name>
        <dbReference type="ChEBI" id="CHEBI:49883"/>
        <label>1</label>
        <note>4Fe-4S-S-AdoMet</note>
    </ligand>
</feature>
<feature type="binding site" evidence="1">
    <location>
        <position position="63"/>
    </location>
    <ligand>
        <name>GTP</name>
        <dbReference type="ChEBI" id="CHEBI:37565"/>
    </ligand>
</feature>
<feature type="binding site" evidence="1">
    <location>
        <position position="67"/>
    </location>
    <ligand>
        <name>S-adenosyl-L-methionine</name>
        <dbReference type="ChEBI" id="CHEBI:59789"/>
    </ligand>
</feature>
<feature type="binding site" evidence="1">
    <location>
        <position position="94"/>
    </location>
    <ligand>
        <name>GTP</name>
        <dbReference type="ChEBI" id="CHEBI:37565"/>
    </ligand>
</feature>
<feature type="binding site" evidence="1">
    <location>
        <position position="118"/>
    </location>
    <ligand>
        <name>S-adenosyl-L-methionine</name>
        <dbReference type="ChEBI" id="CHEBI:59789"/>
    </ligand>
</feature>
<feature type="binding site" evidence="1">
    <location>
        <position position="154"/>
    </location>
    <ligand>
        <name>GTP</name>
        <dbReference type="ChEBI" id="CHEBI:37565"/>
    </ligand>
</feature>
<feature type="binding site" evidence="1">
    <location>
        <position position="188"/>
    </location>
    <ligand>
        <name>S-adenosyl-L-methionine</name>
        <dbReference type="ChEBI" id="CHEBI:59789"/>
    </ligand>
</feature>
<feature type="binding site" evidence="1">
    <location>
        <position position="250"/>
    </location>
    <ligand>
        <name>[4Fe-4S] cluster</name>
        <dbReference type="ChEBI" id="CHEBI:49883"/>
        <label>2</label>
        <note>4Fe-4S-substrate</note>
    </ligand>
</feature>
<feature type="binding site" evidence="1">
    <location>
        <position position="253"/>
    </location>
    <ligand>
        <name>[4Fe-4S] cluster</name>
        <dbReference type="ChEBI" id="CHEBI:49883"/>
        <label>2</label>
        <note>4Fe-4S-substrate</note>
    </ligand>
</feature>
<feature type="binding site" evidence="1">
    <location>
        <begin position="255"/>
        <end position="257"/>
    </location>
    <ligand>
        <name>GTP</name>
        <dbReference type="ChEBI" id="CHEBI:37565"/>
    </ligand>
</feature>
<feature type="binding site" evidence="1">
    <location>
        <position position="267"/>
    </location>
    <ligand>
        <name>[4Fe-4S] cluster</name>
        <dbReference type="ChEBI" id="CHEBI:49883"/>
        <label>2</label>
        <note>4Fe-4S-substrate</note>
    </ligand>
</feature>
<accession>Q0SS32</accession>
<proteinExistence type="inferred from homology"/>
<comment type="function">
    <text evidence="1">Catalyzes the cyclization of GTP to (8S)-3',8-cyclo-7,8-dihydroguanosine 5'-triphosphate.</text>
</comment>
<comment type="catalytic activity">
    <reaction evidence="1">
        <text>GTP + AH2 + S-adenosyl-L-methionine = (8S)-3',8-cyclo-7,8-dihydroguanosine 5'-triphosphate + 5'-deoxyadenosine + L-methionine + A + H(+)</text>
        <dbReference type="Rhea" id="RHEA:49576"/>
        <dbReference type="ChEBI" id="CHEBI:13193"/>
        <dbReference type="ChEBI" id="CHEBI:15378"/>
        <dbReference type="ChEBI" id="CHEBI:17319"/>
        <dbReference type="ChEBI" id="CHEBI:17499"/>
        <dbReference type="ChEBI" id="CHEBI:37565"/>
        <dbReference type="ChEBI" id="CHEBI:57844"/>
        <dbReference type="ChEBI" id="CHEBI:59789"/>
        <dbReference type="ChEBI" id="CHEBI:131766"/>
        <dbReference type="EC" id="4.1.99.22"/>
    </reaction>
</comment>
<comment type="cofactor">
    <cofactor evidence="1">
        <name>[4Fe-4S] cluster</name>
        <dbReference type="ChEBI" id="CHEBI:49883"/>
    </cofactor>
    <text evidence="1">Binds 2 [4Fe-4S] clusters. Binds 1 [4Fe-4S] cluster coordinated with 3 cysteines and an exchangeable S-adenosyl-L-methionine and 1 [4Fe-4S] cluster coordinated with 3 cysteines and the GTP-derived substrate.</text>
</comment>
<comment type="pathway">
    <text evidence="1">Cofactor biosynthesis; molybdopterin biosynthesis.</text>
</comment>
<comment type="subunit">
    <text evidence="1">Monomer and homodimer.</text>
</comment>
<comment type="similarity">
    <text evidence="1">Belongs to the radical SAM superfamily. MoaA family.</text>
</comment>
<dbReference type="EC" id="4.1.99.22" evidence="1"/>
<dbReference type="EMBL" id="CP000312">
    <property type="protein sequence ID" value="ABG85391.1"/>
    <property type="molecule type" value="Genomic_DNA"/>
</dbReference>
<dbReference type="RefSeq" id="WP_011592665.1">
    <property type="nucleotide sequence ID" value="NC_008262.1"/>
</dbReference>
<dbReference type="SMR" id="Q0SS32"/>
<dbReference type="KEGG" id="cpr:CPR_1760"/>
<dbReference type="UniPathway" id="UPA00344"/>
<dbReference type="Proteomes" id="UP000001824">
    <property type="component" value="Chromosome"/>
</dbReference>
<dbReference type="GO" id="GO:0051539">
    <property type="term" value="F:4 iron, 4 sulfur cluster binding"/>
    <property type="evidence" value="ECO:0007669"/>
    <property type="project" value="UniProtKB-UniRule"/>
</dbReference>
<dbReference type="GO" id="GO:0061799">
    <property type="term" value="F:cyclic pyranopterin monophosphate synthase activity"/>
    <property type="evidence" value="ECO:0007669"/>
    <property type="project" value="TreeGrafter"/>
</dbReference>
<dbReference type="GO" id="GO:0061798">
    <property type="term" value="F:GTP 3',8'-cyclase activity"/>
    <property type="evidence" value="ECO:0007669"/>
    <property type="project" value="UniProtKB-UniRule"/>
</dbReference>
<dbReference type="GO" id="GO:0005525">
    <property type="term" value="F:GTP binding"/>
    <property type="evidence" value="ECO:0007669"/>
    <property type="project" value="UniProtKB-UniRule"/>
</dbReference>
<dbReference type="GO" id="GO:0046872">
    <property type="term" value="F:metal ion binding"/>
    <property type="evidence" value="ECO:0007669"/>
    <property type="project" value="UniProtKB-KW"/>
</dbReference>
<dbReference type="GO" id="GO:1904047">
    <property type="term" value="F:S-adenosyl-L-methionine binding"/>
    <property type="evidence" value="ECO:0007669"/>
    <property type="project" value="UniProtKB-UniRule"/>
</dbReference>
<dbReference type="GO" id="GO:0006777">
    <property type="term" value="P:Mo-molybdopterin cofactor biosynthetic process"/>
    <property type="evidence" value="ECO:0007669"/>
    <property type="project" value="UniProtKB-UniRule"/>
</dbReference>
<dbReference type="CDD" id="cd01335">
    <property type="entry name" value="Radical_SAM"/>
    <property type="match status" value="1"/>
</dbReference>
<dbReference type="CDD" id="cd21117">
    <property type="entry name" value="Twitch_MoaA"/>
    <property type="match status" value="1"/>
</dbReference>
<dbReference type="Gene3D" id="3.20.20.70">
    <property type="entry name" value="Aldolase class I"/>
    <property type="match status" value="1"/>
</dbReference>
<dbReference type="HAMAP" id="MF_01225_B">
    <property type="entry name" value="MoaA_B"/>
    <property type="match status" value="1"/>
</dbReference>
<dbReference type="InterPro" id="IPR013785">
    <property type="entry name" value="Aldolase_TIM"/>
</dbReference>
<dbReference type="InterPro" id="IPR006638">
    <property type="entry name" value="Elp3/MiaA/NifB-like_rSAM"/>
</dbReference>
<dbReference type="InterPro" id="IPR013483">
    <property type="entry name" value="MoaA"/>
</dbReference>
<dbReference type="InterPro" id="IPR000385">
    <property type="entry name" value="MoaA_NifB_PqqE_Fe-S-bd_CS"/>
</dbReference>
<dbReference type="InterPro" id="IPR010505">
    <property type="entry name" value="MoaA_twitch"/>
</dbReference>
<dbReference type="InterPro" id="IPR050105">
    <property type="entry name" value="MoCo_biosynth_MoaA/MoaC"/>
</dbReference>
<dbReference type="InterPro" id="IPR007197">
    <property type="entry name" value="rSAM"/>
</dbReference>
<dbReference type="NCBIfam" id="TIGR02666">
    <property type="entry name" value="moaA"/>
    <property type="match status" value="1"/>
</dbReference>
<dbReference type="NCBIfam" id="NF001199">
    <property type="entry name" value="PRK00164.2-1"/>
    <property type="match status" value="1"/>
</dbReference>
<dbReference type="PANTHER" id="PTHR22960:SF0">
    <property type="entry name" value="MOLYBDENUM COFACTOR BIOSYNTHESIS PROTEIN 1"/>
    <property type="match status" value="1"/>
</dbReference>
<dbReference type="PANTHER" id="PTHR22960">
    <property type="entry name" value="MOLYBDOPTERIN COFACTOR SYNTHESIS PROTEIN A"/>
    <property type="match status" value="1"/>
</dbReference>
<dbReference type="Pfam" id="PF13353">
    <property type="entry name" value="Fer4_12"/>
    <property type="match status" value="1"/>
</dbReference>
<dbReference type="Pfam" id="PF06463">
    <property type="entry name" value="Mob_synth_C"/>
    <property type="match status" value="1"/>
</dbReference>
<dbReference type="Pfam" id="PF04055">
    <property type="entry name" value="Radical_SAM"/>
    <property type="match status" value="1"/>
</dbReference>
<dbReference type="SFLD" id="SFLDG01383">
    <property type="entry name" value="cyclic_pyranopterin_phosphate"/>
    <property type="match status" value="1"/>
</dbReference>
<dbReference type="SFLD" id="SFLDG01072">
    <property type="entry name" value="dehydrogenase_like"/>
    <property type="match status" value="1"/>
</dbReference>
<dbReference type="SMART" id="SM00729">
    <property type="entry name" value="Elp3"/>
    <property type="match status" value="1"/>
</dbReference>
<dbReference type="SUPFAM" id="SSF102114">
    <property type="entry name" value="Radical SAM enzymes"/>
    <property type="match status" value="1"/>
</dbReference>
<dbReference type="PROSITE" id="PS01305">
    <property type="entry name" value="MOAA_NIFB_PQQE"/>
    <property type="match status" value="1"/>
</dbReference>
<dbReference type="PROSITE" id="PS51918">
    <property type="entry name" value="RADICAL_SAM"/>
    <property type="match status" value="1"/>
</dbReference>
<sequence>MKDKYGREIDYLRISLTDKCNLRCAYCMEKDHNDFIHNDKLMTLDEILRVVKECASIGIKKVRLTGGEPLVREGIVDLIKNINKIPEIEEICLTTNGILLGDKVKELSENGLKRVNISLDTLKEDRFKEITRIGTLDKVLYSIEKCLENNVKVKINTVILEDFNKDEILDLINLAYKNPIDLRFIELMPIGEGKKFKGVTNSEILEIIKKEKKVLSDGKTLRLNGPAKYISIEGFKGKIGFISAMSDCFCEDCNRIRVTPEGFMKQCLHWKYGINLRDKMRNGISDEELREIIKKSIYEKPEKHNFKMKEKDEDKRFMYEIGG</sequence>
<protein>
    <recommendedName>
        <fullName evidence="1">GTP 3',8-cyclase</fullName>
        <ecNumber evidence="1">4.1.99.22</ecNumber>
    </recommendedName>
    <alternativeName>
        <fullName evidence="1">Molybdenum cofactor biosynthesis protein A</fullName>
    </alternativeName>
</protein>